<comment type="similarity">
    <text evidence="2">Belongs to the nepovirus satellite RNA 48 kDa protein family.</text>
</comment>
<protein>
    <recommendedName>
        <fullName>Satellite RNA 48 kDa protein</fullName>
    </recommendedName>
</protein>
<name>VS48_TBRVL</name>
<accession>P22050</accession>
<sequence>MKSYFCVTPTGCLKTHTRPRIVPKHSKKCLRTYSRPRSSLSDSEGWCVVLPRDGGGRKRKADGSQGRPSNNPGRPSRKWTEKTIAAPPQGFFSRRDNGYWVPKSPEKKYVPKNLPRNMDGKKTYKDALTSPAKIQIKPTPESILLAQKIQNSTFKSRGKVTLSQTSLPLVNRFQELQLNTLLEPVEESTPFGVNDKRAQHLFCKKVERKVGRTTMLVCPITGTESHIDVKRGISARIVDSMASVVHTDKLPEYERGHVVIKNVSRTKRVCTPVPFIGTFSDRAIRVECDDHTDELASASSVPSIWKPSKKQHAVPISSSNEMGSAVGTKPDWYTPVKTCTHRQYQKVQRVFLDAMNIMRTLRFHIGPRELRETWVKCWLQVHKKNVAFPGWMITPLLSGTVPCAQEFFLPLAGENRGFVTVCQA</sequence>
<feature type="chain" id="PRO_0000105578" description="Satellite RNA 48 kDa protein">
    <location>
        <begin position="1"/>
        <end position="424"/>
    </location>
</feature>
<feature type="region of interest" description="Disordered" evidence="1">
    <location>
        <begin position="51"/>
        <end position="83"/>
    </location>
</feature>
<proteinExistence type="inferred from homology"/>
<reference key="1">
    <citation type="journal article" date="1987" name="J. Gen. Virol.">
        <title>Comparison of the nucleotide sequences of five tomato black ring virus satellite RNAs.</title>
        <authorList>
            <person name="Hemmer O."/>
            <person name="Meyer M."/>
            <person name="Greif C."/>
            <person name="Fritsch C."/>
        </authorList>
    </citation>
    <scope>NUCLEOTIDE SEQUENCE [GENOMIC RNA]</scope>
</reference>
<reference key="2">
    <citation type="submission" date="1988-02" db="EMBL/GenBank/DDBJ databases">
        <authorList>
            <person name="Fritsch C."/>
        </authorList>
    </citation>
    <scope>SEQUENCE REVISION</scope>
</reference>
<dbReference type="EMBL" id="X05687">
    <property type="protein sequence ID" value="CAB59632.1"/>
    <property type="molecule type" value="Genomic_RNA"/>
</dbReference>
<dbReference type="PIR" id="A27169">
    <property type="entry name" value="SAVVTL"/>
</dbReference>
<dbReference type="InterPro" id="IPR035312">
    <property type="entry name" value="SatRNA_48"/>
</dbReference>
<dbReference type="Pfam" id="PF17485">
    <property type="entry name" value="SatRNA_48"/>
    <property type="match status" value="1"/>
</dbReference>
<organism>
    <name type="scientific">Tomato black ring virus (strain L)</name>
    <name type="common">TBRV</name>
    <dbReference type="NCBI Taxonomy" id="12278"/>
    <lineage>
        <taxon>Viruses</taxon>
        <taxon>Riboviria</taxon>
        <taxon>Orthornavirae</taxon>
        <taxon>Pisuviricota</taxon>
        <taxon>Pisoniviricetes</taxon>
        <taxon>Picornavirales</taxon>
        <taxon>Secoviridae</taxon>
        <taxon>Comovirinae</taxon>
        <taxon>Nepovirus</taxon>
        <taxon>Nepovirus betae</taxon>
    </lineage>
</organism>
<organismHost>
    <name type="scientific">Allium porrum</name>
    <name type="common">Leek</name>
    <name type="synonym">Allium ampeloprasum var. porrum</name>
    <dbReference type="NCBI Taxonomy" id="4681"/>
</organismHost>
<organismHost>
    <name type="scientific">Apium graveolens</name>
    <name type="common">Celery</name>
    <dbReference type="NCBI Taxonomy" id="4045"/>
</organismHost>
<organismHost>
    <name type="scientific">Beta vulgaris</name>
    <name type="common">Sugar beet</name>
    <dbReference type="NCBI Taxonomy" id="161934"/>
</organismHost>
<organismHost>
    <name type="scientific">Fraxinus</name>
    <name type="common">ash trees</name>
    <dbReference type="NCBI Taxonomy" id="38871"/>
</organismHost>
<organismHost>
    <name type="scientific">Lactuca sativa</name>
    <name type="common">Garden lettuce</name>
    <dbReference type="NCBI Taxonomy" id="4236"/>
</organismHost>
<organismHost>
    <name type="scientific">Narcissus pseudonarcissus</name>
    <name type="common">Daffodil</name>
    <dbReference type="NCBI Taxonomy" id="39639"/>
</organismHost>
<organismHost>
    <name type="scientific">Phaseolus vulgaris</name>
    <name type="common">Kidney bean</name>
    <name type="synonym">French bean</name>
    <dbReference type="NCBI Taxonomy" id="3885"/>
</organismHost>
<organismHost>
    <name type="scientific">Robinia pseudoacacia</name>
    <name type="common">Black locust</name>
    <dbReference type="NCBI Taxonomy" id="35938"/>
</organismHost>
<organismHost>
    <name type="scientific">Rubus</name>
    <name type="common">bramble</name>
    <dbReference type="NCBI Taxonomy" id="23216"/>
</organismHost>
<organismHost>
    <name type="scientific">Solanum lycopersicum</name>
    <name type="common">Tomato</name>
    <name type="synonym">Lycopersicon esculentum</name>
    <dbReference type="NCBI Taxonomy" id="4081"/>
</organismHost>
<organismHost>
    <name type="scientific">Solanum tuberosum</name>
    <name type="common">Potato</name>
    <dbReference type="NCBI Taxonomy" id="4113"/>
</organismHost>
<organismHost>
    <name type="scientific">Tulipa</name>
    <dbReference type="NCBI Taxonomy" id="13305"/>
</organismHost>
<organismHost>
    <name type="scientific">Vitis</name>
    <dbReference type="NCBI Taxonomy" id="3603"/>
</organismHost>
<evidence type="ECO:0000256" key="1">
    <source>
        <dbReference type="SAM" id="MobiDB-lite"/>
    </source>
</evidence>
<evidence type="ECO:0000305" key="2"/>